<dbReference type="EC" id="2.7.7.7" evidence="1"/>
<dbReference type="EMBL" id="U06833">
    <property type="protein sequence ID" value="AAA18178.1"/>
    <property type="molecule type" value="Genomic_DNA"/>
</dbReference>
<dbReference type="EMBL" id="AL445565">
    <property type="protein sequence ID" value="CAC13848.1"/>
    <property type="molecule type" value="Genomic_DNA"/>
</dbReference>
<dbReference type="EMBL" id="L25415">
    <property type="protein sequence ID" value="AAA65635.1"/>
    <property type="molecule type" value="Genomic_DNA"/>
</dbReference>
<dbReference type="PIR" id="C90596">
    <property type="entry name" value="C90596"/>
</dbReference>
<dbReference type="PIR" id="S54697">
    <property type="entry name" value="S54697"/>
</dbReference>
<dbReference type="RefSeq" id="WP_010925476.1">
    <property type="nucleotide sequence ID" value="NC_002771.1"/>
</dbReference>
<dbReference type="SMR" id="P47729"/>
<dbReference type="STRING" id="272635.gene:17577286"/>
<dbReference type="KEGG" id="mpu:MYPU_6750"/>
<dbReference type="eggNOG" id="COG2176">
    <property type="taxonomic scope" value="Bacteria"/>
</dbReference>
<dbReference type="HOGENOM" id="CLU_003297_2_0_14"/>
<dbReference type="BioCyc" id="MPUL272635:G1GT6-689-MONOMER"/>
<dbReference type="Proteomes" id="UP000000528">
    <property type="component" value="Chromosome"/>
</dbReference>
<dbReference type="GO" id="GO:0005737">
    <property type="term" value="C:cytoplasm"/>
    <property type="evidence" value="ECO:0007669"/>
    <property type="project" value="UniProtKB-SubCell"/>
</dbReference>
<dbReference type="GO" id="GO:0008408">
    <property type="term" value="F:3'-5' exonuclease activity"/>
    <property type="evidence" value="ECO:0007669"/>
    <property type="project" value="UniProtKB-UniRule"/>
</dbReference>
<dbReference type="GO" id="GO:0003677">
    <property type="term" value="F:DNA binding"/>
    <property type="evidence" value="ECO:0007669"/>
    <property type="project" value="UniProtKB-UniRule"/>
</dbReference>
<dbReference type="GO" id="GO:0003887">
    <property type="term" value="F:DNA-directed DNA polymerase activity"/>
    <property type="evidence" value="ECO:0007669"/>
    <property type="project" value="UniProtKB-UniRule"/>
</dbReference>
<dbReference type="GO" id="GO:0006261">
    <property type="term" value="P:DNA-templated DNA replication"/>
    <property type="evidence" value="ECO:0007669"/>
    <property type="project" value="UniProtKB-UniRule"/>
</dbReference>
<dbReference type="CDD" id="cd06127">
    <property type="entry name" value="DEDDh"/>
    <property type="match status" value="1"/>
</dbReference>
<dbReference type="CDD" id="cd04484">
    <property type="entry name" value="polC_OBF"/>
    <property type="match status" value="1"/>
</dbReference>
<dbReference type="FunFam" id="3.30.420.10:FF:000045">
    <property type="entry name" value="3'-5' exonuclease DinG"/>
    <property type="match status" value="1"/>
</dbReference>
<dbReference type="Gene3D" id="1.10.150.870">
    <property type="match status" value="1"/>
</dbReference>
<dbReference type="Gene3D" id="3.30.1900.20">
    <property type="match status" value="2"/>
</dbReference>
<dbReference type="Gene3D" id="3.20.20.140">
    <property type="entry name" value="Metal-dependent hydrolases"/>
    <property type="match status" value="2"/>
</dbReference>
<dbReference type="Gene3D" id="2.40.50.140">
    <property type="entry name" value="Nucleic acid-binding proteins"/>
    <property type="match status" value="1"/>
</dbReference>
<dbReference type="Gene3D" id="1.10.150.700">
    <property type="entry name" value="PolC, middle finger domain"/>
    <property type="match status" value="2"/>
</dbReference>
<dbReference type="Gene3D" id="3.30.420.10">
    <property type="entry name" value="Ribonuclease H-like superfamily/Ribonuclease H"/>
    <property type="match status" value="1"/>
</dbReference>
<dbReference type="HAMAP" id="MF_00356">
    <property type="entry name" value="DNApol_PolC"/>
    <property type="match status" value="1"/>
</dbReference>
<dbReference type="InterPro" id="IPR011708">
    <property type="entry name" value="DNA_pol3_alpha_NTPase_dom"/>
</dbReference>
<dbReference type="InterPro" id="IPR040982">
    <property type="entry name" value="DNA_pol3_finger"/>
</dbReference>
<dbReference type="InterPro" id="IPR004805">
    <property type="entry name" value="DnaE2/DnaE/PolC"/>
</dbReference>
<dbReference type="InterPro" id="IPR029460">
    <property type="entry name" value="DNAPol_HHH"/>
</dbReference>
<dbReference type="InterPro" id="IPR006054">
    <property type="entry name" value="DnaQ"/>
</dbReference>
<dbReference type="InterPro" id="IPR013520">
    <property type="entry name" value="Exonuclease_RNaseT/DNA_pol3"/>
</dbReference>
<dbReference type="InterPro" id="IPR012340">
    <property type="entry name" value="NA-bd_OB-fold"/>
</dbReference>
<dbReference type="InterPro" id="IPR004013">
    <property type="entry name" value="PHP_dom"/>
</dbReference>
<dbReference type="InterPro" id="IPR003141">
    <property type="entry name" value="Pol/His_phosphatase_N"/>
</dbReference>
<dbReference type="InterPro" id="IPR016195">
    <property type="entry name" value="Pol/histidinol_Pase-like"/>
</dbReference>
<dbReference type="InterPro" id="IPR006308">
    <property type="entry name" value="Pol_III_a_PolC-type_gram_pos"/>
</dbReference>
<dbReference type="InterPro" id="IPR044923">
    <property type="entry name" value="PolC_middle_finger_sf"/>
</dbReference>
<dbReference type="InterPro" id="IPR012337">
    <property type="entry name" value="RNaseH-like_sf"/>
</dbReference>
<dbReference type="InterPro" id="IPR036397">
    <property type="entry name" value="RNaseH_sf"/>
</dbReference>
<dbReference type="NCBIfam" id="TIGR00573">
    <property type="entry name" value="dnaq"/>
    <property type="match status" value="1"/>
</dbReference>
<dbReference type="NCBIfam" id="TIGR01405">
    <property type="entry name" value="polC_Gram_pos"/>
    <property type="match status" value="1"/>
</dbReference>
<dbReference type="NCBIfam" id="NF001688">
    <property type="entry name" value="PRK00448.1"/>
    <property type="match status" value="1"/>
</dbReference>
<dbReference type="PANTHER" id="PTHR32294:SF5">
    <property type="entry name" value="DNA POLYMERASE III POLC-TYPE"/>
    <property type="match status" value="1"/>
</dbReference>
<dbReference type="PANTHER" id="PTHR32294">
    <property type="entry name" value="DNA POLYMERASE III SUBUNIT ALPHA"/>
    <property type="match status" value="1"/>
</dbReference>
<dbReference type="Pfam" id="PF07733">
    <property type="entry name" value="DNA_pol3_alpha"/>
    <property type="match status" value="2"/>
</dbReference>
<dbReference type="Pfam" id="PF17657">
    <property type="entry name" value="DNA_pol3_finger"/>
    <property type="match status" value="1"/>
</dbReference>
<dbReference type="Pfam" id="PF14579">
    <property type="entry name" value="HHH_6"/>
    <property type="match status" value="1"/>
</dbReference>
<dbReference type="Pfam" id="PF02811">
    <property type="entry name" value="PHP"/>
    <property type="match status" value="1"/>
</dbReference>
<dbReference type="Pfam" id="PF00929">
    <property type="entry name" value="RNase_T"/>
    <property type="match status" value="1"/>
</dbReference>
<dbReference type="SMART" id="SM00479">
    <property type="entry name" value="EXOIII"/>
    <property type="match status" value="1"/>
</dbReference>
<dbReference type="SMART" id="SM00481">
    <property type="entry name" value="POLIIIAc"/>
    <property type="match status" value="1"/>
</dbReference>
<dbReference type="SUPFAM" id="SSF89550">
    <property type="entry name" value="PHP domain-like"/>
    <property type="match status" value="1"/>
</dbReference>
<dbReference type="SUPFAM" id="SSF81585">
    <property type="entry name" value="PsbU/PolX domain-like"/>
    <property type="match status" value="1"/>
</dbReference>
<dbReference type="SUPFAM" id="SSF53098">
    <property type="entry name" value="Ribonuclease H-like"/>
    <property type="match status" value="1"/>
</dbReference>
<protein>
    <recommendedName>
        <fullName evidence="1">DNA polymerase III PolC-type</fullName>
        <shortName evidence="1">PolIII</shortName>
        <ecNumber evidence="1">2.7.7.7</ecNumber>
    </recommendedName>
</protein>
<comment type="function">
    <text>Required for replicative DNA synthesis. This DNA polymerase also exhibits 3' to 5' exonuclease activity.</text>
</comment>
<comment type="catalytic activity">
    <reaction evidence="1">
        <text>DNA(n) + a 2'-deoxyribonucleoside 5'-triphosphate = DNA(n+1) + diphosphate</text>
        <dbReference type="Rhea" id="RHEA:22508"/>
        <dbReference type="Rhea" id="RHEA-COMP:17339"/>
        <dbReference type="Rhea" id="RHEA-COMP:17340"/>
        <dbReference type="ChEBI" id="CHEBI:33019"/>
        <dbReference type="ChEBI" id="CHEBI:61560"/>
        <dbReference type="ChEBI" id="CHEBI:173112"/>
        <dbReference type="EC" id="2.7.7.7"/>
    </reaction>
</comment>
<comment type="subcellular location">
    <subcellularLocation>
        <location evidence="1">Cytoplasm</location>
    </subcellularLocation>
</comment>
<comment type="similarity">
    <text evidence="1">Belongs to the DNA polymerase type-C family. PolC subfamily.</text>
</comment>
<keyword id="KW-0963">Cytoplasm</keyword>
<keyword id="KW-0235">DNA replication</keyword>
<keyword id="KW-0239">DNA-directed DNA polymerase</keyword>
<keyword id="KW-0269">Exonuclease</keyword>
<keyword id="KW-0378">Hydrolase</keyword>
<keyword id="KW-0540">Nuclease</keyword>
<keyword id="KW-0548">Nucleotidyltransferase</keyword>
<keyword id="KW-1185">Reference proteome</keyword>
<keyword id="KW-0808">Transferase</keyword>
<organism>
    <name type="scientific">Mycoplasmopsis pulmonis (strain UAB CTIP)</name>
    <name type="common">Mycoplasma pulmonis</name>
    <dbReference type="NCBI Taxonomy" id="272635"/>
    <lineage>
        <taxon>Bacteria</taxon>
        <taxon>Bacillati</taxon>
        <taxon>Mycoplasmatota</taxon>
        <taxon>Mycoplasmoidales</taxon>
        <taxon>Metamycoplasmataceae</taxon>
        <taxon>Mycoplasmopsis</taxon>
    </lineage>
</organism>
<name>DPO3_MYCPU</name>
<sequence>MQESFLNFCQEINFDIPEYLKNTKIANPYHDEEKSFFSCEIDFLETPKFEDFKSFYLKTKNFLNQLVKEQKLLFKIENIFYEKSEIKKYLDWIAEHFFKNFDFKNTFRIDDLKVNLDGKIFLTAHSKHSFDLYKDFVEFANKKMQSFGFENFLLKLELNQIEITNNQPLVSSINSQVKTQASSENQSFKKSNFYNKKRHIQLSLKELIKTQEMFVSVVGMVFKKEIITTNSKTKIFKISITDFQEATRAQKFSYLEKDQEIFDSIQINDWVNVCGEIQLEKMSLKQFIKIEKIEKIRSPIKDRQDNEKEKRIELSFRSKMSTMDGILSPLDIVKQAKKFNHSSIAILDHNSVQAFPDFHNLTYKDKDFKVIYGMTLSVISKRNKIFVEPLKDKFFDYKILDQEYVVYDIETTGLSPMLNELIQFGASVIKNGRIIETHHFFIKPKSKLDSFTTKLTGITQEHLEKGYELQEALEKISSIFKARIMVAHNAAFDHNFLKQKFIDNNIEFEEMISIDTLNLAKVLNPIYRSYRLGEVASKLSVVYDPSIAHRADYDSSVLTNIFILQMSHLKEKGINLFKELNSLSSEKFYSKMFAKDISIIAKNQAGLKELFKINSDVLTKYYFANPKMFWEDIKRSKNLLIGSGGLNSPLIDKLLFSTQEDVLNEIDKYDYIEIPSPNNFSHFWTTKFSDQQIKIQLQKLIKWAKEKNKIIVAIGEPRYNEKWQKIIHEIYINSTGIENSLHPLFIIKKDMDTFYPEQIYKTTNEMKQEFSFLYDPELIEEIVVKNPNLISSQIEKIQVIKDKLYTPKFDDSHIKLKKLVYENAWKKYGKNLPEIIEQRIEKELTPILNYGFDVIYWISSILVQKSLSDGYLVGSRGSIGSSLVATLSGITEVNPLAPHYICSKCQYFELVKDPMTNSGFDLDDKKCPKCNSFLDKDGQTIPFETFLGFKADKVPDIDLNFSGEYQGKIHDEVKRLFGSKHTFRAGTISTVAEKTAYGYIKKYLETASLDYSDNFVDFLTEKSTGVKRTTGQHPGGIIIIPKEFDVEDFTPVNFPANDTESSWKTTHFDFHAIHDNVLKLDILGHDDPTALKMLEKLTGVNVKDIPKKDEKIISIFTSPKALGISSEEILGEKTGALGIPEFGTNFVRQMLSEAKPKTFADLVSISGLSHGTDVWINNAHYIIQSLGKTLDQVISCRDDIMVDLIKKGVPIDLSFTIMEQVRKGKGLSLEQKRKLIEHGIENWYIESMEKIKYMFPKAHATAYVLMAWRVAFYKVYYPLEYYATYFSTRTEFFDIEIMSKDKLTLESKIKELAYRENLRNDNQLTTKEKNTLPTLYIANEMKARGFNIQNINLKISLANDWIIDKNSKSLIPPFNVIDGLGETLAQKIVDSRNEKEFLSVEDFINRTGINSTLVEKFKSMGIFEQIPETNQIFLI</sequence>
<proteinExistence type="inferred from homology"/>
<reference key="1">
    <citation type="journal article" date="1994" name="Mol. Microbiol.">
        <title>DNA polymerase III of Mycoplasma pulmonis: isolation and characterization of the enzyme and its structural gene, polC.</title>
        <authorList>
            <person name="Barnes M.H."/>
            <person name="Tarantino P.M. Jr."/>
            <person name="Spacciapoli P."/>
            <person name="Brown N.C."/>
            <person name="Yu H."/>
            <person name="Dybvig K."/>
        </authorList>
    </citation>
    <scope>NUCLEOTIDE SEQUENCE [GENOMIC DNA]</scope>
    <source>
        <strain>KD735-15</strain>
    </source>
</reference>
<reference key="2">
    <citation type="journal article" date="2001" name="Nucleic Acids Res.">
        <title>The complete genome sequence of the murine respiratory pathogen Mycoplasma pulmonis.</title>
        <authorList>
            <person name="Chambaud I."/>
            <person name="Heilig R."/>
            <person name="Ferris S."/>
            <person name="Barbe V."/>
            <person name="Samson D."/>
            <person name="Galisson F."/>
            <person name="Moszer I."/>
            <person name="Dybvig K."/>
            <person name="Wroblewski H."/>
            <person name="Viari A."/>
            <person name="Rocha E.P.C."/>
            <person name="Blanchard A."/>
        </authorList>
    </citation>
    <scope>NUCLEOTIDE SEQUENCE [LARGE SCALE GENOMIC DNA]</scope>
    <source>
        <strain>UAB CTIP</strain>
    </source>
</reference>
<reference key="3">
    <citation type="journal article" date="1994" name="Mol. Microbiol.">
        <title>Regulation of a restriction and modification system via DNA inversion in Mycoplasma pulmonis.</title>
        <authorList>
            <person name="Dybvig K."/>
            <person name="Yu H."/>
        </authorList>
    </citation>
    <scope>NUCLEOTIDE SEQUENCE [GENOMIC DNA] OF 1408-1435</scope>
    <source>
        <strain>KD735-16</strain>
    </source>
</reference>
<evidence type="ECO:0000255" key="1">
    <source>
        <dbReference type="HAMAP-Rule" id="MF_00356"/>
    </source>
</evidence>
<evidence type="ECO:0000305" key="2"/>
<feature type="chain" id="PRO_0000204584" description="DNA polymerase III PolC-type">
    <location>
        <begin position="1"/>
        <end position="1435"/>
    </location>
</feature>
<feature type="domain" description="Exonuclease">
    <location>
        <begin position="404"/>
        <end position="562"/>
    </location>
</feature>
<feature type="sequence conflict" description="In Ref. 1; AAA18178." evidence="2" ref="1">
    <original>NP</original>
    <variation>S</variation>
    <location>
        <begin position="786"/>
        <end position="787"/>
    </location>
</feature>
<feature type="sequence conflict" description="In Ref. 1; AAA18178." evidence="2" ref="1">
    <original>R</original>
    <variation>KE</variation>
    <location>
        <position position="1233"/>
    </location>
</feature>
<accession>P47729</accession>
<accession>Q79E72</accession>
<gene>
    <name evidence="1" type="primary">polC</name>
    <name type="ordered locus">MYPU_6750</name>
</gene>